<protein>
    <recommendedName>
        <fullName evidence="1">Endonuclease MutS2</fullName>
        <ecNumber evidence="1">3.1.-.-</ecNumber>
    </recommendedName>
    <alternativeName>
        <fullName evidence="1">Ribosome-associated protein quality control-upstream factor</fullName>
        <shortName evidence="1">RQC-upstream factor</shortName>
        <shortName evidence="1">RqcU</shortName>
        <ecNumber evidence="1">3.6.4.-</ecNumber>
    </alternativeName>
</protein>
<gene>
    <name evidence="1" type="primary">mutS2</name>
    <name evidence="1" type="synonym">rqcU</name>
    <name type="ordered locus">LEUM_1717</name>
</gene>
<evidence type="ECO:0000255" key="1">
    <source>
        <dbReference type="HAMAP-Rule" id="MF_00092"/>
    </source>
</evidence>
<proteinExistence type="inferred from homology"/>
<keyword id="KW-0067">ATP-binding</keyword>
<keyword id="KW-0238">DNA-binding</keyword>
<keyword id="KW-0255">Endonuclease</keyword>
<keyword id="KW-0378">Hydrolase</keyword>
<keyword id="KW-0540">Nuclease</keyword>
<keyword id="KW-0547">Nucleotide-binding</keyword>
<keyword id="KW-1185">Reference proteome</keyword>
<keyword id="KW-0694">RNA-binding</keyword>
<keyword id="KW-0699">rRNA-binding</keyword>
<dbReference type="EC" id="3.1.-.-" evidence="1"/>
<dbReference type="EC" id="3.6.4.-" evidence="1"/>
<dbReference type="EMBL" id="CP000414">
    <property type="protein sequence ID" value="ABJ62804.1"/>
    <property type="molecule type" value="Genomic_DNA"/>
</dbReference>
<dbReference type="RefSeq" id="WP_011680326.1">
    <property type="nucleotide sequence ID" value="NC_008531.1"/>
</dbReference>
<dbReference type="SMR" id="Q03VG8"/>
<dbReference type="EnsemblBacteria" id="ABJ62804">
    <property type="protein sequence ID" value="ABJ62804"/>
    <property type="gene ID" value="LEUM_1717"/>
</dbReference>
<dbReference type="GeneID" id="29576989"/>
<dbReference type="KEGG" id="lme:LEUM_1717"/>
<dbReference type="eggNOG" id="COG1193">
    <property type="taxonomic scope" value="Bacteria"/>
</dbReference>
<dbReference type="HOGENOM" id="CLU_011252_2_1_9"/>
<dbReference type="Proteomes" id="UP000000362">
    <property type="component" value="Chromosome"/>
</dbReference>
<dbReference type="GO" id="GO:0005524">
    <property type="term" value="F:ATP binding"/>
    <property type="evidence" value="ECO:0007669"/>
    <property type="project" value="UniProtKB-UniRule"/>
</dbReference>
<dbReference type="GO" id="GO:0016887">
    <property type="term" value="F:ATP hydrolysis activity"/>
    <property type="evidence" value="ECO:0007669"/>
    <property type="project" value="InterPro"/>
</dbReference>
<dbReference type="GO" id="GO:0140664">
    <property type="term" value="F:ATP-dependent DNA damage sensor activity"/>
    <property type="evidence" value="ECO:0007669"/>
    <property type="project" value="InterPro"/>
</dbReference>
<dbReference type="GO" id="GO:0004519">
    <property type="term" value="F:endonuclease activity"/>
    <property type="evidence" value="ECO:0007669"/>
    <property type="project" value="UniProtKB-UniRule"/>
</dbReference>
<dbReference type="GO" id="GO:0030983">
    <property type="term" value="F:mismatched DNA binding"/>
    <property type="evidence" value="ECO:0007669"/>
    <property type="project" value="InterPro"/>
</dbReference>
<dbReference type="GO" id="GO:0043023">
    <property type="term" value="F:ribosomal large subunit binding"/>
    <property type="evidence" value="ECO:0007669"/>
    <property type="project" value="UniProtKB-UniRule"/>
</dbReference>
<dbReference type="GO" id="GO:0019843">
    <property type="term" value="F:rRNA binding"/>
    <property type="evidence" value="ECO:0007669"/>
    <property type="project" value="UniProtKB-UniRule"/>
</dbReference>
<dbReference type="GO" id="GO:0006298">
    <property type="term" value="P:mismatch repair"/>
    <property type="evidence" value="ECO:0007669"/>
    <property type="project" value="InterPro"/>
</dbReference>
<dbReference type="GO" id="GO:0045910">
    <property type="term" value="P:negative regulation of DNA recombination"/>
    <property type="evidence" value="ECO:0007669"/>
    <property type="project" value="InterPro"/>
</dbReference>
<dbReference type="GO" id="GO:0072344">
    <property type="term" value="P:rescue of stalled ribosome"/>
    <property type="evidence" value="ECO:0007669"/>
    <property type="project" value="UniProtKB-UniRule"/>
</dbReference>
<dbReference type="CDD" id="cd03280">
    <property type="entry name" value="ABC_MutS2"/>
    <property type="match status" value="1"/>
</dbReference>
<dbReference type="FunFam" id="3.40.50.300:FF:000830">
    <property type="entry name" value="Endonuclease MutS2"/>
    <property type="match status" value="1"/>
</dbReference>
<dbReference type="Gene3D" id="1.10.1420.10">
    <property type="match status" value="2"/>
</dbReference>
<dbReference type="Gene3D" id="3.30.1370.110">
    <property type="match status" value="1"/>
</dbReference>
<dbReference type="Gene3D" id="3.40.50.300">
    <property type="entry name" value="P-loop containing nucleotide triphosphate hydrolases"/>
    <property type="match status" value="1"/>
</dbReference>
<dbReference type="HAMAP" id="MF_00092">
    <property type="entry name" value="MutS2"/>
    <property type="match status" value="1"/>
</dbReference>
<dbReference type="InterPro" id="IPR000432">
    <property type="entry name" value="DNA_mismatch_repair_MutS_C"/>
</dbReference>
<dbReference type="InterPro" id="IPR007696">
    <property type="entry name" value="DNA_mismatch_repair_MutS_core"/>
</dbReference>
<dbReference type="InterPro" id="IPR036187">
    <property type="entry name" value="DNA_mismatch_repair_MutS_sf"/>
</dbReference>
<dbReference type="InterPro" id="IPR046893">
    <property type="entry name" value="MSSS"/>
</dbReference>
<dbReference type="InterPro" id="IPR045076">
    <property type="entry name" value="MutS"/>
</dbReference>
<dbReference type="InterPro" id="IPR005747">
    <property type="entry name" value="MutS2"/>
</dbReference>
<dbReference type="InterPro" id="IPR027417">
    <property type="entry name" value="P-loop_NTPase"/>
</dbReference>
<dbReference type="InterPro" id="IPR002625">
    <property type="entry name" value="Smr_dom"/>
</dbReference>
<dbReference type="InterPro" id="IPR036063">
    <property type="entry name" value="Smr_dom_sf"/>
</dbReference>
<dbReference type="NCBIfam" id="TIGR01069">
    <property type="entry name" value="mutS2"/>
    <property type="match status" value="1"/>
</dbReference>
<dbReference type="PANTHER" id="PTHR48466:SF2">
    <property type="entry name" value="OS10G0509000 PROTEIN"/>
    <property type="match status" value="1"/>
</dbReference>
<dbReference type="PANTHER" id="PTHR48466">
    <property type="entry name" value="OS10G0509000 PROTEIN-RELATED"/>
    <property type="match status" value="1"/>
</dbReference>
<dbReference type="Pfam" id="PF20297">
    <property type="entry name" value="MSSS"/>
    <property type="match status" value="1"/>
</dbReference>
<dbReference type="Pfam" id="PF00488">
    <property type="entry name" value="MutS_V"/>
    <property type="match status" value="1"/>
</dbReference>
<dbReference type="Pfam" id="PF01713">
    <property type="entry name" value="Smr"/>
    <property type="match status" value="1"/>
</dbReference>
<dbReference type="PIRSF" id="PIRSF005814">
    <property type="entry name" value="MutS_YshD"/>
    <property type="match status" value="1"/>
</dbReference>
<dbReference type="SMART" id="SM00534">
    <property type="entry name" value="MUTSac"/>
    <property type="match status" value="1"/>
</dbReference>
<dbReference type="SMART" id="SM00533">
    <property type="entry name" value="MUTSd"/>
    <property type="match status" value="1"/>
</dbReference>
<dbReference type="SMART" id="SM00463">
    <property type="entry name" value="SMR"/>
    <property type="match status" value="1"/>
</dbReference>
<dbReference type="SUPFAM" id="SSF48334">
    <property type="entry name" value="DNA repair protein MutS, domain III"/>
    <property type="match status" value="1"/>
</dbReference>
<dbReference type="SUPFAM" id="SSF52540">
    <property type="entry name" value="P-loop containing nucleoside triphosphate hydrolases"/>
    <property type="match status" value="1"/>
</dbReference>
<dbReference type="SUPFAM" id="SSF160443">
    <property type="entry name" value="SMR domain-like"/>
    <property type="match status" value="1"/>
</dbReference>
<dbReference type="PROSITE" id="PS00486">
    <property type="entry name" value="DNA_MISMATCH_REPAIR_2"/>
    <property type="match status" value="1"/>
</dbReference>
<dbReference type="PROSITE" id="PS50828">
    <property type="entry name" value="SMR"/>
    <property type="match status" value="1"/>
</dbReference>
<comment type="function">
    <text evidence="1">Endonuclease that is involved in the suppression of homologous recombination and thus may have a key role in the control of bacterial genetic diversity.</text>
</comment>
<comment type="function">
    <text evidence="1">Acts as a ribosome collision sensor, splitting the ribosome into its 2 subunits. Detects stalled/collided 70S ribosomes which it binds and splits by an ATP-hydrolysis driven conformational change. Acts upstream of the ribosome quality control system (RQC), a ribosome-associated complex that mediates the extraction of incompletely synthesized nascent chains from stalled ribosomes and their subsequent degradation. Probably generates substrates for RQC.</text>
</comment>
<comment type="subunit">
    <text evidence="1">Homodimer. Binds to stalled ribosomes, contacting rRNA.</text>
</comment>
<comment type="similarity">
    <text evidence="1">Belongs to the DNA mismatch repair MutS family. MutS2 subfamily.</text>
</comment>
<sequence length="800" mass="88514">MNQKVLQTLEYDKIKSQLSDFLSTPIGRQEADALQPITDVHIINYWLQETADAMMIDRLKGGIPLAKLADITPHLKRLNIQASLSATELAEIGNVLRNTSAISNFFIQMKDESIGESLEVLIEQAEQLETLPEVTKSIQTAIDSTGRINDEASYELKSVRGKIVGHENAIKNKMQEFTKGKTAQYLSDPIVTIRSDRYVLPVKAEYRSQFGGVVHDQSQTGLTLYIEPQAVVELSNKLSELRVKESAEEQRVLQELSAELEPHTNEIQQNVQILGHFDFVNAKARLAARLDAMQPTVSVENHISLRQAWHPLLDKKIAVANDISLGDSYKTIIITGPNTGGKTITIKTLGLLQLMAQSGLFITTRQPSTIGIFDEVFADIGDEQSIEQNLSTFSSHMANIVSMLDHIDDKTLVIFDELGAGTDPAEGAALAIAILDKVASLGAYTIATTHYPELKLYGYNRPETKNASMVFDVETLQPTYQFLMGVPGQSNALAIAKRLGFGEDVIGAAMALTDESDQDLNNMIADLVAQRDEVKKNNEELRSQLKATEEKSEALSEEQSKLEKERAHVILDAKNEANHIVAATKKQAEQLISEIRKERLRAGQRGELTEQELQARKGKLDQLRQNDSLEKNKILQKAKKVKELAPGDEITVRSYSQQGTLVKKHKNGQWEVEMGILKMLVDEDDIVKTEATVKAQKGKAKKKQQKIIRKTTSSGSTRASVKSSLDLRGVRYEAALTELDRYLDTAVLANISPVEIIHGKGTGALRQGVTEFLRSDRRVKSYHFASANAGGDGATIVELK</sequence>
<reference key="1">
    <citation type="journal article" date="2006" name="Proc. Natl. Acad. Sci. U.S.A.">
        <title>Comparative genomics of the lactic acid bacteria.</title>
        <authorList>
            <person name="Makarova K.S."/>
            <person name="Slesarev A."/>
            <person name="Wolf Y.I."/>
            <person name="Sorokin A."/>
            <person name="Mirkin B."/>
            <person name="Koonin E.V."/>
            <person name="Pavlov A."/>
            <person name="Pavlova N."/>
            <person name="Karamychev V."/>
            <person name="Polouchine N."/>
            <person name="Shakhova V."/>
            <person name="Grigoriev I."/>
            <person name="Lou Y."/>
            <person name="Rohksar D."/>
            <person name="Lucas S."/>
            <person name="Huang K."/>
            <person name="Goodstein D.M."/>
            <person name="Hawkins T."/>
            <person name="Plengvidhya V."/>
            <person name="Welker D."/>
            <person name="Hughes J."/>
            <person name="Goh Y."/>
            <person name="Benson A."/>
            <person name="Baldwin K."/>
            <person name="Lee J.-H."/>
            <person name="Diaz-Muniz I."/>
            <person name="Dosti B."/>
            <person name="Smeianov V."/>
            <person name="Wechter W."/>
            <person name="Barabote R."/>
            <person name="Lorca G."/>
            <person name="Altermann E."/>
            <person name="Barrangou R."/>
            <person name="Ganesan B."/>
            <person name="Xie Y."/>
            <person name="Rawsthorne H."/>
            <person name="Tamir D."/>
            <person name="Parker C."/>
            <person name="Breidt F."/>
            <person name="Broadbent J.R."/>
            <person name="Hutkins R."/>
            <person name="O'Sullivan D."/>
            <person name="Steele J."/>
            <person name="Unlu G."/>
            <person name="Saier M.H. Jr."/>
            <person name="Klaenhammer T."/>
            <person name="Richardson P."/>
            <person name="Kozyavkin S."/>
            <person name="Weimer B.C."/>
            <person name="Mills D.A."/>
        </authorList>
    </citation>
    <scope>NUCLEOTIDE SEQUENCE [LARGE SCALE GENOMIC DNA]</scope>
    <source>
        <strain>ATCC 8293 / DSM 20343 / BCRC 11652 / CCM 1803 / JCM 6124 / NCDO 523 / NBRC 100496 / NCIMB 8023 / NCTC 12954 / NRRL B-1118 / 37Y</strain>
    </source>
</reference>
<accession>Q03VG8</accession>
<organism>
    <name type="scientific">Leuconostoc mesenteroides subsp. mesenteroides (strain ATCC 8293 / DSM 20343 / BCRC 11652 / CCM 1803 / JCM 6124 / NCDO 523 / NBRC 100496 / NCIMB 8023 / NCTC 12954 / NRRL B-1118 / 37Y)</name>
    <dbReference type="NCBI Taxonomy" id="203120"/>
    <lineage>
        <taxon>Bacteria</taxon>
        <taxon>Bacillati</taxon>
        <taxon>Bacillota</taxon>
        <taxon>Bacilli</taxon>
        <taxon>Lactobacillales</taxon>
        <taxon>Lactobacillaceae</taxon>
        <taxon>Leuconostoc</taxon>
    </lineage>
</organism>
<name>MUTS2_LEUMM</name>
<feature type="chain" id="PRO_1000093374" description="Endonuclease MutS2">
    <location>
        <begin position="1"/>
        <end position="800"/>
    </location>
</feature>
<feature type="domain" description="Smr" evidence="1">
    <location>
        <begin position="725"/>
        <end position="800"/>
    </location>
</feature>
<feature type="binding site" evidence="1">
    <location>
        <begin position="336"/>
        <end position="343"/>
    </location>
    <ligand>
        <name>ATP</name>
        <dbReference type="ChEBI" id="CHEBI:30616"/>
    </ligand>
</feature>